<reference key="1">
    <citation type="journal article" date="2001" name="Nature">
        <title>Complete genome sequence of Salmonella enterica serovar Typhimurium LT2.</title>
        <authorList>
            <person name="McClelland M."/>
            <person name="Sanderson K.E."/>
            <person name="Spieth J."/>
            <person name="Clifton S.W."/>
            <person name="Latreille P."/>
            <person name="Courtney L."/>
            <person name="Porwollik S."/>
            <person name="Ali J."/>
            <person name="Dante M."/>
            <person name="Du F."/>
            <person name="Hou S."/>
            <person name="Layman D."/>
            <person name="Leonard S."/>
            <person name="Nguyen C."/>
            <person name="Scott K."/>
            <person name="Holmes A."/>
            <person name="Grewal N."/>
            <person name="Mulvaney E."/>
            <person name="Ryan E."/>
            <person name="Sun H."/>
            <person name="Florea L."/>
            <person name="Miller W."/>
            <person name="Stoneking T."/>
            <person name="Nhan M."/>
            <person name="Waterston R."/>
            <person name="Wilson R.K."/>
        </authorList>
    </citation>
    <scope>NUCLEOTIDE SEQUENCE [LARGE SCALE GENOMIC DNA]</scope>
    <source>
        <strain>LT2 / SGSC1412 / ATCC 700720</strain>
    </source>
</reference>
<comment type="function">
    <text evidence="1">Globally modulates RNA abundance by binding to RNase E (Rne) and regulating its endonucleolytic activity. Can modulate Rne action in a substrate-dependent manner by altering the composition of the degradosome. Modulates RNA-binding and helicase activities of the degradosome.</text>
</comment>
<comment type="subunit">
    <text evidence="1">Homotrimer. Binds to both RNA-binding sites in the C-terminal region of Rne and to RhlB.</text>
</comment>
<comment type="subcellular location">
    <subcellularLocation>
        <location evidence="1">Cytoplasm</location>
    </subcellularLocation>
</comment>
<comment type="similarity">
    <text evidence="1">Belongs to the RraA family.</text>
</comment>
<accession>P67651</accession>
<accession>Q8XEL8</accession>
<name>RRAA_SALTY</name>
<gene>
    <name evidence="1" type="primary">rraA</name>
    <name type="ordered locus">STM4089</name>
</gene>
<dbReference type="EMBL" id="AE006468">
    <property type="protein sequence ID" value="AAL22929.1"/>
    <property type="molecule type" value="Genomic_DNA"/>
</dbReference>
<dbReference type="RefSeq" id="WP_000872918.1">
    <property type="nucleotide sequence ID" value="NC_003197.2"/>
</dbReference>
<dbReference type="SMR" id="P67651"/>
<dbReference type="STRING" id="99287.STM4089"/>
<dbReference type="PaxDb" id="99287-STM4089"/>
<dbReference type="KEGG" id="stm:STM4089"/>
<dbReference type="PATRIC" id="fig|99287.12.peg.4310"/>
<dbReference type="HOGENOM" id="CLU_072626_4_0_6"/>
<dbReference type="OMA" id="RSCDTQF"/>
<dbReference type="PhylomeDB" id="P67651"/>
<dbReference type="BioCyc" id="SENT99287:STM4089-MONOMER"/>
<dbReference type="Proteomes" id="UP000001014">
    <property type="component" value="Chromosome"/>
</dbReference>
<dbReference type="GO" id="GO:0005829">
    <property type="term" value="C:cytosol"/>
    <property type="evidence" value="ECO:0000318"/>
    <property type="project" value="GO_Central"/>
</dbReference>
<dbReference type="GO" id="GO:0060698">
    <property type="term" value="F:endoribonuclease inhibitor activity"/>
    <property type="evidence" value="ECO:0007669"/>
    <property type="project" value="UniProtKB-UniRule"/>
</dbReference>
<dbReference type="GO" id="GO:0019899">
    <property type="term" value="F:enzyme binding"/>
    <property type="evidence" value="ECO:0007669"/>
    <property type="project" value="UniProtKB-UniRule"/>
</dbReference>
<dbReference type="GO" id="GO:1902369">
    <property type="term" value="P:negative regulation of RNA catabolic process"/>
    <property type="evidence" value="ECO:0000318"/>
    <property type="project" value="GO_Central"/>
</dbReference>
<dbReference type="CDD" id="cd16841">
    <property type="entry name" value="RraA_family"/>
    <property type="match status" value="1"/>
</dbReference>
<dbReference type="FunFam" id="3.50.30.40:FF:000001">
    <property type="entry name" value="Regulator of ribonuclease activity A"/>
    <property type="match status" value="1"/>
</dbReference>
<dbReference type="Gene3D" id="3.50.30.40">
    <property type="entry name" value="Ribonuclease E inhibitor RraA/RraA-like"/>
    <property type="match status" value="1"/>
</dbReference>
<dbReference type="HAMAP" id="MF_00471">
    <property type="entry name" value="RraA"/>
    <property type="match status" value="1"/>
</dbReference>
<dbReference type="InterPro" id="IPR010203">
    <property type="entry name" value="RraA"/>
</dbReference>
<dbReference type="InterPro" id="IPR005493">
    <property type="entry name" value="RraA/RraA-like"/>
</dbReference>
<dbReference type="InterPro" id="IPR036704">
    <property type="entry name" value="RraA/RraA-like_sf"/>
</dbReference>
<dbReference type="InterPro" id="IPR014339">
    <property type="entry name" value="RraA_gpbac"/>
</dbReference>
<dbReference type="NCBIfam" id="TIGR01935">
    <property type="entry name" value="NOT-MenG"/>
    <property type="match status" value="1"/>
</dbReference>
<dbReference type="NCBIfam" id="NF006875">
    <property type="entry name" value="PRK09372.1"/>
    <property type="match status" value="1"/>
</dbReference>
<dbReference type="NCBIfam" id="TIGR02998">
    <property type="entry name" value="RraA_entero"/>
    <property type="match status" value="1"/>
</dbReference>
<dbReference type="PANTHER" id="PTHR33254">
    <property type="entry name" value="4-HYDROXY-4-METHYL-2-OXOGLUTARATE ALDOLASE 3-RELATED"/>
    <property type="match status" value="1"/>
</dbReference>
<dbReference type="PANTHER" id="PTHR33254:SF29">
    <property type="entry name" value="REGULATOR OF RIBONUCLEASE ACTIVITY A"/>
    <property type="match status" value="1"/>
</dbReference>
<dbReference type="Pfam" id="PF03737">
    <property type="entry name" value="RraA-like"/>
    <property type="match status" value="1"/>
</dbReference>
<dbReference type="SUPFAM" id="SSF89562">
    <property type="entry name" value="RraA-like"/>
    <property type="match status" value="1"/>
</dbReference>
<sequence>MKYDTSELCDIYQEDVNVVEPLFSNFGGRSSFGGQIITVKCFEDNGLLYDLLEQNGRGRVLLVDGGGSVRRALVDAELARLATQNEWEGLVIYGAVRQVDDLEELDIGIQAIAAIPVGAAGEGIGESDVRVNFGGVTFFSGDHLYADNTGIILSEDPLDIE</sequence>
<keyword id="KW-0963">Cytoplasm</keyword>
<keyword id="KW-1185">Reference proteome</keyword>
<evidence type="ECO:0000255" key="1">
    <source>
        <dbReference type="HAMAP-Rule" id="MF_00471"/>
    </source>
</evidence>
<feature type="chain" id="PRO_0000209635" description="Regulator of ribonuclease activity A">
    <location>
        <begin position="1"/>
        <end position="161"/>
    </location>
</feature>
<organism>
    <name type="scientific">Salmonella typhimurium (strain LT2 / SGSC1412 / ATCC 700720)</name>
    <dbReference type="NCBI Taxonomy" id="99287"/>
    <lineage>
        <taxon>Bacteria</taxon>
        <taxon>Pseudomonadati</taxon>
        <taxon>Pseudomonadota</taxon>
        <taxon>Gammaproteobacteria</taxon>
        <taxon>Enterobacterales</taxon>
        <taxon>Enterobacteriaceae</taxon>
        <taxon>Salmonella</taxon>
    </lineage>
</organism>
<proteinExistence type="inferred from homology"/>
<protein>
    <recommendedName>
        <fullName evidence="1">Regulator of ribonuclease activity A</fullName>
    </recommendedName>
</protein>